<comment type="function">
    <text evidence="1">Zinc phosphodiesterase, which displays some tRNA 3'-processing endonuclease activity. Probably involved in tRNA maturation, by removing a 3'-trailer from precursor tRNA.</text>
</comment>
<comment type="catalytic activity">
    <reaction evidence="1">
        <text>Endonucleolytic cleavage of RNA, removing extra 3' nucleotides from tRNA precursor, generating 3' termini of tRNAs. A 3'-hydroxy group is left at the tRNA terminus and a 5'-phosphoryl group is left at the trailer molecule.</text>
        <dbReference type="EC" id="3.1.26.11"/>
    </reaction>
</comment>
<comment type="cofactor">
    <cofactor evidence="1">
        <name>Zn(2+)</name>
        <dbReference type="ChEBI" id="CHEBI:29105"/>
    </cofactor>
    <text evidence="1">Binds 2 Zn(2+) ions.</text>
</comment>
<comment type="subunit">
    <text evidence="1">Homodimer.</text>
</comment>
<comment type="similarity">
    <text evidence="1">Belongs to the RNase Z family.</text>
</comment>
<name>RNZ_NATPD</name>
<keyword id="KW-0255">Endonuclease</keyword>
<keyword id="KW-0378">Hydrolase</keyword>
<keyword id="KW-0479">Metal-binding</keyword>
<keyword id="KW-0540">Nuclease</keyword>
<keyword id="KW-1185">Reference proteome</keyword>
<keyword id="KW-0819">tRNA processing</keyword>
<keyword id="KW-0862">Zinc</keyword>
<feature type="chain" id="PRO_1000070309" description="Ribonuclease Z">
    <location>
        <begin position="1"/>
        <end position="308"/>
    </location>
</feature>
<feature type="active site" description="Proton acceptor" evidence="1">
    <location>
        <position position="65"/>
    </location>
</feature>
<feature type="binding site" evidence="1">
    <location>
        <position position="61"/>
    </location>
    <ligand>
        <name>Zn(2+)</name>
        <dbReference type="ChEBI" id="CHEBI:29105"/>
        <label>1</label>
        <note>catalytic</note>
    </ligand>
</feature>
<feature type="binding site" evidence="1">
    <location>
        <position position="63"/>
    </location>
    <ligand>
        <name>Zn(2+)</name>
        <dbReference type="ChEBI" id="CHEBI:29105"/>
        <label>1</label>
        <note>catalytic</note>
    </ligand>
</feature>
<feature type="binding site" evidence="1">
    <location>
        <position position="65"/>
    </location>
    <ligand>
        <name>Zn(2+)</name>
        <dbReference type="ChEBI" id="CHEBI:29105"/>
        <label>2</label>
        <note>catalytic</note>
    </ligand>
</feature>
<feature type="binding site" evidence="1">
    <location>
        <position position="66"/>
    </location>
    <ligand>
        <name>Zn(2+)</name>
        <dbReference type="ChEBI" id="CHEBI:29105"/>
        <label>2</label>
        <note>catalytic</note>
    </ligand>
</feature>
<feature type="binding site" evidence="1">
    <location>
        <position position="139"/>
    </location>
    <ligand>
        <name>Zn(2+)</name>
        <dbReference type="ChEBI" id="CHEBI:29105"/>
        <label>1</label>
        <note>catalytic</note>
    </ligand>
</feature>
<feature type="binding site" evidence="1">
    <location>
        <position position="210"/>
    </location>
    <ligand>
        <name>Zn(2+)</name>
        <dbReference type="ChEBI" id="CHEBI:29105"/>
        <label>1</label>
        <note>catalytic</note>
    </ligand>
</feature>
<feature type="binding site" evidence="1">
    <location>
        <position position="210"/>
    </location>
    <ligand>
        <name>Zn(2+)</name>
        <dbReference type="ChEBI" id="CHEBI:29105"/>
        <label>2</label>
        <note>catalytic</note>
    </ligand>
</feature>
<feature type="binding site" evidence="1">
    <location>
        <position position="268"/>
    </location>
    <ligand>
        <name>Zn(2+)</name>
        <dbReference type="ChEBI" id="CHEBI:29105"/>
        <label>2</label>
        <note>catalytic</note>
    </ligand>
</feature>
<organism>
    <name type="scientific">Natronomonas pharaonis (strain ATCC 35678 / DSM 2160 / CIP 103997 / JCM 8858 / NBRC 14720 / NCIMB 2260 / Gabara)</name>
    <name type="common">Halobacterium pharaonis</name>
    <dbReference type="NCBI Taxonomy" id="348780"/>
    <lineage>
        <taxon>Archaea</taxon>
        <taxon>Methanobacteriati</taxon>
        <taxon>Methanobacteriota</taxon>
        <taxon>Stenosarchaea group</taxon>
        <taxon>Halobacteria</taxon>
        <taxon>Halobacteriales</taxon>
        <taxon>Haloarculaceae</taxon>
        <taxon>Natronomonas</taxon>
    </lineage>
</organism>
<accession>Q3IRM5</accession>
<evidence type="ECO:0000255" key="1">
    <source>
        <dbReference type="HAMAP-Rule" id="MF_01818"/>
    </source>
</evidence>
<protein>
    <recommendedName>
        <fullName evidence="1">Ribonuclease Z</fullName>
        <shortName evidence="1">RNase Z</shortName>
        <ecNumber evidence="1">3.1.26.11</ecNumber>
    </recommendedName>
    <alternativeName>
        <fullName evidence="1">tRNA 3 endonuclease</fullName>
    </alternativeName>
    <alternativeName>
        <fullName evidence="1">tRNase Z</fullName>
    </alternativeName>
</protein>
<reference key="1">
    <citation type="journal article" date="2005" name="Genome Res.">
        <title>Living with two extremes: conclusions from the genome sequence of Natronomonas pharaonis.</title>
        <authorList>
            <person name="Falb M."/>
            <person name="Pfeiffer F."/>
            <person name="Palm P."/>
            <person name="Rodewald K."/>
            <person name="Hickmann V."/>
            <person name="Tittor J."/>
            <person name="Oesterhelt D."/>
        </authorList>
    </citation>
    <scope>NUCLEOTIDE SEQUENCE [LARGE SCALE GENOMIC DNA]</scope>
    <source>
        <strain>ATCC 35678 / DSM 2160 / CIP 103997 / JCM 8858 / NBRC 14720 / NCIMB 2260 / Gabara</strain>
    </source>
</reference>
<gene>
    <name evidence="1" type="primary">rnz</name>
    <name type="ordered locus">NP_2254A</name>
</gene>
<proteinExistence type="inferred from homology"/>
<dbReference type="EC" id="3.1.26.11" evidence="1"/>
<dbReference type="EMBL" id="CR936257">
    <property type="protein sequence ID" value="CAI49218.1"/>
    <property type="molecule type" value="Genomic_DNA"/>
</dbReference>
<dbReference type="RefSeq" id="WP_011322845.1">
    <property type="nucleotide sequence ID" value="NC_007426.1"/>
</dbReference>
<dbReference type="SMR" id="Q3IRM5"/>
<dbReference type="STRING" id="348780.NP_2254A"/>
<dbReference type="EnsemblBacteria" id="CAI49218">
    <property type="protein sequence ID" value="CAI49218"/>
    <property type="gene ID" value="NP_2254A"/>
</dbReference>
<dbReference type="GeneID" id="3701393"/>
<dbReference type="KEGG" id="nph:NP_2254A"/>
<dbReference type="eggNOG" id="arCOG00501">
    <property type="taxonomic scope" value="Archaea"/>
</dbReference>
<dbReference type="HOGENOM" id="CLU_031317_2_1_2"/>
<dbReference type="OrthoDB" id="85118at2157"/>
<dbReference type="Proteomes" id="UP000002698">
    <property type="component" value="Chromosome"/>
</dbReference>
<dbReference type="GO" id="GO:0042781">
    <property type="term" value="F:3'-tRNA processing endoribonuclease activity"/>
    <property type="evidence" value="ECO:0007669"/>
    <property type="project" value="UniProtKB-UniRule"/>
</dbReference>
<dbReference type="GO" id="GO:0008270">
    <property type="term" value="F:zinc ion binding"/>
    <property type="evidence" value="ECO:0007669"/>
    <property type="project" value="UniProtKB-UniRule"/>
</dbReference>
<dbReference type="CDD" id="cd07717">
    <property type="entry name" value="RNaseZ_ZiPD-like_MBL-fold"/>
    <property type="match status" value="1"/>
</dbReference>
<dbReference type="FunFam" id="3.60.15.10:FF:000002">
    <property type="entry name" value="Ribonuclease Z"/>
    <property type="match status" value="1"/>
</dbReference>
<dbReference type="Gene3D" id="3.60.15.10">
    <property type="entry name" value="Ribonuclease Z/Hydroxyacylglutathione hydrolase-like"/>
    <property type="match status" value="1"/>
</dbReference>
<dbReference type="HAMAP" id="MF_01818">
    <property type="entry name" value="RNase_Z_BN"/>
    <property type="match status" value="1"/>
</dbReference>
<dbReference type="InterPro" id="IPR001279">
    <property type="entry name" value="Metallo-B-lactamas"/>
</dbReference>
<dbReference type="InterPro" id="IPR036866">
    <property type="entry name" value="RibonucZ/Hydroxyglut_hydro"/>
</dbReference>
<dbReference type="InterPro" id="IPR013471">
    <property type="entry name" value="RNase_Z/BN"/>
</dbReference>
<dbReference type="NCBIfam" id="NF000801">
    <property type="entry name" value="PRK00055.1-3"/>
    <property type="match status" value="1"/>
</dbReference>
<dbReference type="NCBIfam" id="TIGR02651">
    <property type="entry name" value="RNase_Z"/>
    <property type="match status" value="1"/>
</dbReference>
<dbReference type="PANTHER" id="PTHR46018">
    <property type="entry name" value="ZINC PHOSPHODIESTERASE ELAC PROTEIN 1"/>
    <property type="match status" value="1"/>
</dbReference>
<dbReference type="PANTHER" id="PTHR46018:SF2">
    <property type="entry name" value="ZINC PHOSPHODIESTERASE ELAC PROTEIN 1"/>
    <property type="match status" value="1"/>
</dbReference>
<dbReference type="Pfam" id="PF00753">
    <property type="entry name" value="Lactamase_B"/>
    <property type="match status" value="1"/>
</dbReference>
<dbReference type="SMART" id="SM00849">
    <property type="entry name" value="Lactamase_B"/>
    <property type="match status" value="1"/>
</dbReference>
<dbReference type="SUPFAM" id="SSF56281">
    <property type="entry name" value="Metallo-hydrolase/oxidoreductase"/>
    <property type="match status" value="1"/>
</dbReference>
<sequence length="308" mass="33420">MSLRVTFLGTSGAVPTTRRNTSAVFLRREGDRMLFDCGEGTQRQMMRFGTGFAVSKAFITHLHGDHILGLPGLLQTMDFNDREEPLSVYVPSGKQAELRDLIDTAAGAPSFPVHVNGVSDGQVVVDADDYEIRAFETDHDARSLGYALIEASRKGRFDRERAEELGVPVGPKFQQLHAGEAVELEDGTVVEPEQVVGDPRPGRRVVYTGDTRPTDRTVTVAENADLLIHDATFATDNADRAARTAHSTAAEAADIASRADARRLALVHISSRYAGDPSPIEREADDAFGGEAFVPEDGDTVDIPFPDE</sequence>